<reference key="1">
    <citation type="journal article" date="2004" name="J. Mol. Microbiol. Biotechnol.">
        <title>The complete genome sequence of Bacillus licheniformis DSM13, an organism with great industrial potential.</title>
        <authorList>
            <person name="Veith B."/>
            <person name="Herzberg C."/>
            <person name="Steckel S."/>
            <person name="Feesche J."/>
            <person name="Maurer K.H."/>
            <person name="Ehrenreich P."/>
            <person name="Baeumer S."/>
            <person name="Henne A."/>
            <person name="Liesegang H."/>
            <person name="Merkl R."/>
            <person name="Ehrenreich A."/>
            <person name="Gottschalk G."/>
        </authorList>
    </citation>
    <scope>NUCLEOTIDE SEQUENCE [LARGE SCALE GENOMIC DNA]</scope>
    <source>
        <strain>ATCC 14580 / DSM 13 / JCM 2505 / CCUG 7422 / NBRC 12200 / NCIMB 9375 / NCTC 10341 / NRRL NRS-1264 / Gibson 46</strain>
    </source>
</reference>
<reference key="2">
    <citation type="journal article" date="2004" name="Genome Biol.">
        <title>Complete genome sequence of the industrial bacterium Bacillus licheniformis and comparisons with closely related Bacillus species.</title>
        <authorList>
            <person name="Rey M.W."/>
            <person name="Ramaiya P."/>
            <person name="Nelson B.A."/>
            <person name="Brody-Karpin S.D."/>
            <person name="Zaretsky E.J."/>
            <person name="Tang M."/>
            <person name="Lopez de Leon A."/>
            <person name="Xiang H."/>
            <person name="Gusti V."/>
            <person name="Clausen I.G."/>
            <person name="Olsen P.B."/>
            <person name="Rasmussen M.D."/>
            <person name="Andersen J.T."/>
            <person name="Joergensen P.L."/>
            <person name="Larsen T.S."/>
            <person name="Sorokin A."/>
            <person name="Bolotin A."/>
            <person name="Lapidus A."/>
            <person name="Galleron N."/>
            <person name="Ehrlich S.D."/>
            <person name="Berka R.M."/>
        </authorList>
    </citation>
    <scope>NUCLEOTIDE SEQUENCE [LARGE SCALE GENOMIC DNA]</scope>
    <source>
        <strain>ATCC 14580 / DSM 13 / JCM 2505 / CCUG 7422 / NBRC 12200 / NCIMB 9375 / NCTC 10341 / NRRL NRS-1264 / Gibson 46</strain>
    </source>
</reference>
<dbReference type="EMBL" id="AE017333">
    <property type="protein sequence ID" value="AAU39941.1"/>
    <property type="molecule type" value="Genomic_DNA"/>
</dbReference>
<dbReference type="EMBL" id="CP000002">
    <property type="protein sequence ID" value="AAU22598.1"/>
    <property type="molecule type" value="Genomic_DNA"/>
</dbReference>
<dbReference type="RefSeq" id="WP_003180155.1">
    <property type="nucleotide sequence ID" value="NC_006322.1"/>
</dbReference>
<dbReference type="SMR" id="Q65LX3"/>
<dbReference type="STRING" id="279010.BL02844"/>
<dbReference type="KEGG" id="bld:BLi01033"/>
<dbReference type="KEGG" id="bli:BL02844"/>
<dbReference type="eggNOG" id="COG0239">
    <property type="taxonomic scope" value="Bacteria"/>
</dbReference>
<dbReference type="HOGENOM" id="CLU_114342_1_2_9"/>
<dbReference type="Proteomes" id="UP000000606">
    <property type="component" value="Chromosome"/>
</dbReference>
<dbReference type="GO" id="GO:0005886">
    <property type="term" value="C:plasma membrane"/>
    <property type="evidence" value="ECO:0007669"/>
    <property type="project" value="UniProtKB-SubCell"/>
</dbReference>
<dbReference type="GO" id="GO:0062054">
    <property type="term" value="F:fluoride channel activity"/>
    <property type="evidence" value="ECO:0007669"/>
    <property type="project" value="UniProtKB-UniRule"/>
</dbReference>
<dbReference type="GO" id="GO:0046872">
    <property type="term" value="F:metal ion binding"/>
    <property type="evidence" value="ECO:0007669"/>
    <property type="project" value="UniProtKB-KW"/>
</dbReference>
<dbReference type="GO" id="GO:0140114">
    <property type="term" value="P:cellular detoxification of fluoride"/>
    <property type="evidence" value="ECO:0007669"/>
    <property type="project" value="UniProtKB-UniRule"/>
</dbReference>
<dbReference type="HAMAP" id="MF_00454">
    <property type="entry name" value="FluC"/>
    <property type="match status" value="1"/>
</dbReference>
<dbReference type="InterPro" id="IPR003691">
    <property type="entry name" value="FluC"/>
</dbReference>
<dbReference type="PANTHER" id="PTHR28259">
    <property type="entry name" value="FLUORIDE EXPORT PROTEIN 1-RELATED"/>
    <property type="match status" value="1"/>
</dbReference>
<dbReference type="PANTHER" id="PTHR28259:SF16">
    <property type="entry name" value="FLUORIDE-SPECIFIC ION CHANNEL FLUC 2"/>
    <property type="match status" value="1"/>
</dbReference>
<dbReference type="Pfam" id="PF02537">
    <property type="entry name" value="CRCB"/>
    <property type="match status" value="1"/>
</dbReference>
<protein>
    <recommendedName>
        <fullName evidence="1">Fluoride-specific ion channel FluC 2</fullName>
    </recommendedName>
</protein>
<sequence length="132" mass="13795">MKSYVAVFIGGAIGSLLRYAVNLLGGTAVFPWPTFIENTSGSLLLGLLTGFFAARAKKPLVQLCLGTGFCGGYTTMSAFSKETVLLLQSAAHIGVLYLMASLACGVCFAFLGIVIGKKVSGAAGKEKERYQS</sequence>
<feature type="chain" id="PRO_0000110053" description="Fluoride-specific ion channel FluC 2">
    <location>
        <begin position="1"/>
        <end position="132"/>
    </location>
</feature>
<feature type="transmembrane region" description="Helical" evidence="1">
    <location>
        <begin position="5"/>
        <end position="25"/>
    </location>
</feature>
<feature type="transmembrane region" description="Helical" evidence="1">
    <location>
        <begin position="34"/>
        <end position="54"/>
    </location>
</feature>
<feature type="transmembrane region" description="Helical" evidence="1">
    <location>
        <begin position="59"/>
        <end position="79"/>
    </location>
</feature>
<feature type="transmembrane region" description="Helical" evidence="1">
    <location>
        <begin position="95"/>
        <end position="115"/>
    </location>
</feature>
<feature type="binding site" evidence="1">
    <location>
        <position position="71"/>
    </location>
    <ligand>
        <name>Na(+)</name>
        <dbReference type="ChEBI" id="CHEBI:29101"/>
        <note>structural</note>
    </ligand>
</feature>
<feature type="binding site" evidence="1">
    <location>
        <position position="74"/>
    </location>
    <ligand>
        <name>Na(+)</name>
        <dbReference type="ChEBI" id="CHEBI:29101"/>
        <note>structural</note>
    </ligand>
</feature>
<gene>
    <name evidence="1" type="primary">fluC2</name>
    <name evidence="1" type="synonym">crcB2</name>
    <name type="ordered locus">BLi01033</name>
    <name type="ordered locus">BL02844</name>
</gene>
<organism>
    <name type="scientific">Bacillus licheniformis (strain ATCC 14580 / DSM 13 / JCM 2505 / CCUG 7422 / NBRC 12200 / NCIMB 9375 / NCTC 10341 / NRRL NRS-1264 / Gibson 46)</name>
    <dbReference type="NCBI Taxonomy" id="279010"/>
    <lineage>
        <taxon>Bacteria</taxon>
        <taxon>Bacillati</taxon>
        <taxon>Bacillota</taxon>
        <taxon>Bacilli</taxon>
        <taxon>Bacillales</taxon>
        <taxon>Bacillaceae</taxon>
        <taxon>Bacillus</taxon>
    </lineage>
</organism>
<comment type="function">
    <text evidence="1">Fluoride-specific ion channel. Important for reducing fluoride concentration in the cell, thus reducing its toxicity.</text>
</comment>
<comment type="catalytic activity">
    <reaction evidence="1">
        <text>fluoride(in) = fluoride(out)</text>
        <dbReference type="Rhea" id="RHEA:76159"/>
        <dbReference type="ChEBI" id="CHEBI:17051"/>
    </reaction>
    <physiologicalReaction direction="left-to-right" evidence="1">
        <dbReference type="Rhea" id="RHEA:76160"/>
    </physiologicalReaction>
</comment>
<comment type="activity regulation">
    <text evidence="1">Na(+) is not transported, but it plays an essential structural role and its presence is essential for fluoride channel function.</text>
</comment>
<comment type="subcellular location">
    <subcellularLocation>
        <location evidence="1">Cell membrane</location>
        <topology evidence="1">Multi-pass membrane protein</topology>
    </subcellularLocation>
</comment>
<comment type="similarity">
    <text evidence="1">Belongs to the fluoride channel Fluc/FEX (TC 1.A.43) family.</text>
</comment>
<proteinExistence type="inferred from homology"/>
<name>FLUC2_BACLD</name>
<keyword id="KW-1003">Cell membrane</keyword>
<keyword id="KW-0407">Ion channel</keyword>
<keyword id="KW-0406">Ion transport</keyword>
<keyword id="KW-0472">Membrane</keyword>
<keyword id="KW-0479">Metal-binding</keyword>
<keyword id="KW-1185">Reference proteome</keyword>
<keyword id="KW-0915">Sodium</keyword>
<keyword id="KW-0812">Transmembrane</keyword>
<keyword id="KW-1133">Transmembrane helix</keyword>
<keyword id="KW-0813">Transport</keyword>
<accession>Q65LX3</accession>
<accession>Q62XB0</accession>
<evidence type="ECO:0000255" key="1">
    <source>
        <dbReference type="HAMAP-Rule" id="MF_00454"/>
    </source>
</evidence>